<protein>
    <recommendedName>
        <fullName evidence="1">Bifunctional purine biosynthesis protein PurH</fullName>
    </recommendedName>
    <domain>
        <recommendedName>
            <fullName evidence="1">Phosphoribosylaminoimidazolecarboxamide formyltransferase</fullName>
            <ecNumber evidence="1">2.1.2.3</ecNumber>
        </recommendedName>
        <alternativeName>
            <fullName evidence="1">AICAR transformylase</fullName>
        </alternativeName>
    </domain>
    <domain>
        <recommendedName>
            <fullName evidence="1">IMP cyclohydrolase</fullName>
            <ecNumber evidence="1">3.5.4.10</ecNumber>
        </recommendedName>
        <alternativeName>
            <fullName evidence="1">ATIC</fullName>
        </alternativeName>
        <alternativeName>
            <fullName evidence="1">IMP synthase</fullName>
        </alternativeName>
        <alternativeName>
            <fullName evidence="1">Inosinicase</fullName>
        </alternativeName>
    </domain>
</protein>
<evidence type="ECO:0000255" key="1">
    <source>
        <dbReference type="HAMAP-Rule" id="MF_00139"/>
    </source>
</evidence>
<evidence type="ECO:0000255" key="2">
    <source>
        <dbReference type="PROSITE-ProRule" id="PRU01202"/>
    </source>
</evidence>
<accession>B5F1I9</accession>
<sequence>MQQRRPVRRALLSVSDKAGIIEFAQALSARGVELLSTGGTARLLAEKGLPVTEVSDYTGFPEMMDGRVKTLHPKVHGGILGRRGQDDAIMEQHHIAPIDMVVVNLYPFAETVAREGCSLEDAVENIDIGGPTMVRSAAKNHKDVAIVVKSSDYDAIIKEMDANEGSLTLDTRFDLAIKAFEHTAAYDSMIANYFGSMVPAYHGESKEAAGRFPRTLNLNFIKKQDMRYGENSHQQAAFYIEENVKEASVATAQQVQGKALSYNNIADTDAALECVKAFNEPACVIVKHANPCGVAVSTSILDAYDRAYKTDPTSAFGGIIAFNRELDAETAQAIISRQFVEVIIAPSATEEALKITAAKQNVRVLTCGQWAQRVPGLDFKRVNGGLLVQDRDLGMVSEAELRVVSKRQPTEQELRDALFCWKVAKFVKSNAIVYAKENMTIGIGAGQMSRVYSAKIAGIKAADEGLEVKGSAMASDAFFPFRDGIDAAAAVGVSCVIQPGGSIRDEEVIAAADEHGIAMIFTDMRHFRH</sequence>
<dbReference type="EC" id="2.1.2.3" evidence="1"/>
<dbReference type="EC" id="3.5.4.10" evidence="1"/>
<dbReference type="EMBL" id="CP001138">
    <property type="protein sequence ID" value="ACH49409.1"/>
    <property type="molecule type" value="Genomic_DNA"/>
</dbReference>
<dbReference type="RefSeq" id="WP_001187505.1">
    <property type="nucleotide sequence ID" value="NC_011149.1"/>
</dbReference>
<dbReference type="SMR" id="B5F1I9"/>
<dbReference type="KEGG" id="sea:SeAg_B4420"/>
<dbReference type="HOGENOM" id="CLU_016316_5_2_6"/>
<dbReference type="UniPathway" id="UPA00074">
    <property type="reaction ID" value="UER00133"/>
</dbReference>
<dbReference type="UniPathway" id="UPA00074">
    <property type="reaction ID" value="UER00135"/>
</dbReference>
<dbReference type="Proteomes" id="UP000008819">
    <property type="component" value="Chromosome"/>
</dbReference>
<dbReference type="GO" id="GO:0005829">
    <property type="term" value="C:cytosol"/>
    <property type="evidence" value="ECO:0007669"/>
    <property type="project" value="TreeGrafter"/>
</dbReference>
<dbReference type="GO" id="GO:0003937">
    <property type="term" value="F:IMP cyclohydrolase activity"/>
    <property type="evidence" value="ECO:0007669"/>
    <property type="project" value="UniProtKB-UniRule"/>
</dbReference>
<dbReference type="GO" id="GO:0004643">
    <property type="term" value="F:phosphoribosylaminoimidazolecarboxamide formyltransferase activity"/>
    <property type="evidence" value="ECO:0007669"/>
    <property type="project" value="UniProtKB-UniRule"/>
</dbReference>
<dbReference type="GO" id="GO:0006189">
    <property type="term" value="P:'de novo' IMP biosynthetic process"/>
    <property type="evidence" value="ECO:0007669"/>
    <property type="project" value="UniProtKB-UniRule"/>
</dbReference>
<dbReference type="CDD" id="cd01421">
    <property type="entry name" value="IMPCH"/>
    <property type="match status" value="1"/>
</dbReference>
<dbReference type="FunFam" id="3.40.140.20:FF:000001">
    <property type="entry name" value="Bifunctional purine biosynthesis protein PurH"/>
    <property type="match status" value="1"/>
</dbReference>
<dbReference type="FunFam" id="3.40.140.20:FF:000002">
    <property type="entry name" value="Bifunctional purine biosynthesis protein PurH"/>
    <property type="match status" value="1"/>
</dbReference>
<dbReference type="FunFam" id="3.40.50.1380:FF:000001">
    <property type="entry name" value="Bifunctional purine biosynthesis protein PurH"/>
    <property type="match status" value="1"/>
</dbReference>
<dbReference type="Gene3D" id="3.40.140.20">
    <property type="match status" value="2"/>
</dbReference>
<dbReference type="Gene3D" id="3.40.50.1380">
    <property type="entry name" value="Methylglyoxal synthase-like domain"/>
    <property type="match status" value="1"/>
</dbReference>
<dbReference type="HAMAP" id="MF_00139">
    <property type="entry name" value="PurH"/>
    <property type="match status" value="1"/>
</dbReference>
<dbReference type="InterPro" id="IPR024051">
    <property type="entry name" value="AICAR_Tfase_dup_dom_sf"/>
</dbReference>
<dbReference type="InterPro" id="IPR016193">
    <property type="entry name" value="Cytidine_deaminase-like"/>
</dbReference>
<dbReference type="InterPro" id="IPR011607">
    <property type="entry name" value="MGS-like_dom"/>
</dbReference>
<dbReference type="InterPro" id="IPR036914">
    <property type="entry name" value="MGS-like_dom_sf"/>
</dbReference>
<dbReference type="InterPro" id="IPR002695">
    <property type="entry name" value="PurH-like"/>
</dbReference>
<dbReference type="NCBIfam" id="NF002049">
    <property type="entry name" value="PRK00881.1"/>
    <property type="match status" value="1"/>
</dbReference>
<dbReference type="NCBIfam" id="TIGR00355">
    <property type="entry name" value="purH"/>
    <property type="match status" value="1"/>
</dbReference>
<dbReference type="PANTHER" id="PTHR11692:SF0">
    <property type="entry name" value="BIFUNCTIONAL PURINE BIOSYNTHESIS PROTEIN ATIC"/>
    <property type="match status" value="1"/>
</dbReference>
<dbReference type="PANTHER" id="PTHR11692">
    <property type="entry name" value="BIFUNCTIONAL PURINE BIOSYNTHESIS PROTEIN PURH"/>
    <property type="match status" value="1"/>
</dbReference>
<dbReference type="Pfam" id="PF01808">
    <property type="entry name" value="AICARFT_IMPCHas"/>
    <property type="match status" value="1"/>
</dbReference>
<dbReference type="Pfam" id="PF02142">
    <property type="entry name" value="MGS"/>
    <property type="match status" value="1"/>
</dbReference>
<dbReference type="PIRSF" id="PIRSF000414">
    <property type="entry name" value="AICARFT_IMPCHas"/>
    <property type="match status" value="1"/>
</dbReference>
<dbReference type="SMART" id="SM00798">
    <property type="entry name" value="AICARFT_IMPCHas"/>
    <property type="match status" value="1"/>
</dbReference>
<dbReference type="SMART" id="SM00851">
    <property type="entry name" value="MGS"/>
    <property type="match status" value="1"/>
</dbReference>
<dbReference type="SUPFAM" id="SSF53927">
    <property type="entry name" value="Cytidine deaminase-like"/>
    <property type="match status" value="1"/>
</dbReference>
<dbReference type="SUPFAM" id="SSF52335">
    <property type="entry name" value="Methylglyoxal synthase-like"/>
    <property type="match status" value="1"/>
</dbReference>
<dbReference type="PROSITE" id="PS51855">
    <property type="entry name" value="MGS"/>
    <property type="match status" value="1"/>
</dbReference>
<organism>
    <name type="scientific">Salmonella agona (strain SL483)</name>
    <dbReference type="NCBI Taxonomy" id="454166"/>
    <lineage>
        <taxon>Bacteria</taxon>
        <taxon>Pseudomonadati</taxon>
        <taxon>Pseudomonadota</taxon>
        <taxon>Gammaproteobacteria</taxon>
        <taxon>Enterobacterales</taxon>
        <taxon>Enterobacteriaceae</taxon>
        <taxon>Salmonella</taxon>
    </lineage>
</organism>
<reference key="1">
    <citation type="journal article" date="2011" name="J. Bacteriol.">
        <title>Comparative genomics of 28 Salmonella enterica isolates: evidence for CRISPR-mediated adaptive sublineage evolution.</title>
        <authorList>
            <person name="Fricke W.F."/>
            <person name="Mammel M.K."/>
            <person name="McDermott P.F."/>
            <person name="Tartera C."/>
            <person name="White D.G."/>
            <person name="Leclerc J.E."/>
            <person name="Ravel J."/>
            <person name="Cebula T.A."/>
        </authorList>
    </citation>
    <scope>NUCLEOTIDE SEQUENCE [LARGE SCALE GENOMIC DNA]</scope>
    <source>
        <strain>SL483</strain>
    </source>
</reference>
<feature type="chain" id="PRO_1000096088" description="Bifunctional purine biosynthesis protein PurH">
    <location>
        <begin position="1"/>
        <end position="529"/>
    </location>
</feature>
<feature type="domain" description="MGS-like" evidence="2">
    <location>
        <begin position="1"/>
        <end position="148"/>
    </location>
</feature>
<comment type="catalytic activity">
    <reaction evidence="1">
        <text>(6R)-10-formyltetrahydrofolate + 5-amino-1-(5-phospho-beta-D-ribosyl)imidazole-4-carboxamide = 5-formamido-1-(5-phospho-D-ribosyl)imidazole-4-carboxamide + (6S)-5,6,7,8-tetrahydrofolate</text>
        <dbReference type="Rhea" id="RHEA:22192"/>
        <dbReference type="ChEBI" id="CHEBI:57453"/>
        <dbReference type="ChEBI" id="CHEBI:58467"/>
        <dbReference type="ChEBI" id="CHEBI:58475"/>
        <dbReference type="ChEBI" id="CHEBI:195366"/>
        <dbReference type="EC" id="2.1.2.3"/>
    </reaction>
</comment>
<comment type="catalytic activity">
    <reaction evidence="1">
        <text>IMP + H2O = 5-formamido-1-(5-phospho-D-ribosyl)imidazole-4-carboxamide</text>
        <dbReference type="Rhea" id="RHEA:18445"/>
        <dbReference type="ChEBI" id="CHEBI:15377"/>
        <dbReference type="ChEBI" id="CHEBI:58053"/>
        <dbReference type="ChEBI" id="CHEBI:58467"/>
        <dbReference type="EC" id="3.5.4.10"/>
    </reaction>
</comment>
<comment type="pathway">
    <text evidence="1">Purine metabolism; IMP biosynthesis via de novo pathway; 5-formamido-1-(5-phospho-D-ribosyl)imidazole-4-carboxamide from 5-amino-1-(5-phospho-D-ribosyl)imidazole-4-carboxamide (10-formyl THF route): step 1/1.</text>
</comment>
<comment type="pathway">
    <text evidence="1">Purine metabolism; IMP biosynthesis via de novo pathway; IMP from 5-formamido-1-(5-phospho-D-ribosyl)imidazole-4-carboxamide: step 1/1.</text>
</comment>
<comment type="domain">
    <text evidence="1">The IMP cyclohydrolase activity resides in the N-terminal region.</text>
</comment>
<comment type="similarity">
    <text evidence="1">Belongs to the PurH family.</text>
</comment>
<gene>
    <name evidence="1" type="primary">purH</name>
    <name type="ordered locus">SeAg_B4420</name>
</gene>
<name>PUR9_SALA4</name>
<proteinExistence type="inferred from homology"/>
<keyword id="KW-0378">Hydrolase</keyword>
<keyword id="KW-0511">Multifunctional enzyme</keyword>
<keyword id="KW-0658">Purine biosynthesis</keyword>
<keyword id="KW-0808">Transferase</keyword>